<organism>
    <name type="scientific">Leptospira biflexa serovar Patoc (strain Patoc 1 / ATCC 23582 / Paris)</name>
    <dbReference type="NCBI Taxonomy" id="456481"/>
    <lineage>
        <taxon>Bacteria</taxon>
        <taxon>Pseudomonadati</taxon>
        <taxon>Spirochaetota</taxon>
        <taxon>Spirochaetia</taxon>
        <taxon>Leptospirales</taxon>
        <taxon>Leptospiraceae</taxon>
        <taxon>Leptospira</taxon>
    </lineage>
</organism>
<comment type="function">
    <text evidence="1">Participates actively in the response to hyperosmotic and heat shock by preventing the aggregation of stress-denatured proteins, in association with DnaK and GrpE. It is the nucleotide exchange factor for DnaK and may function as a thermosensor. Unfolded proteins bind initially to DnaJ; upon interaction with the DnaJ-bound protein, DnaK hydrolyzes its bound ATP, resulting in the formation of a stable complex. GrpE releases ADP from DnaK; ATP binding to DnaK triggers the release of the substrate protein, thus completing the reaction cycle. Several rounds of ATP-dependent interactions between DnaJ, DnaK and GrpE are required for fully efficient folding.</text>
</comment>
<comment type="subunit">
    <text evidence="1">Homodimer.</text>
</comment>
<comment type="subcellular location">
    <subcellularLocation>
        <location evidence="1">Cytoplasm</location>
    </subcellularLocation>
</comment>
<comment type="similarity">
    <text evidence="1">Belongs to the GrpE family.</text>
</comment>
<evidence type="ECO:0000255" key="1">
    <source>
        <dbReference type="HAMAP-Rule" id="MF_01151"/>
    </source>
</evidence>
<evidence type="ECO:0000256" key="2">
    <source>
        <dbReference type="SAM" id="MobiDB-lite"/>
    </source>
</evidence>
<protein>
    <recommendedName>
        <fullName evidence="1">Protein GrpE</fullName>
    </recommendedName>
    <alternativeName>
        <fullName evidence="1">HSP-70 cofactor</fullName>
    </alternativeName>
</protein>
<dbReference type="EMBL" id="CP000786">
    <property type="protein sequence ID" value="ABZ99444.1"/>
    <property type="molecule type" value="Genomic_DNA"/>
</dbReference>
<dbReference type="RefSeq" id="WP_012390300.1">
    <property type="nucleotide sequence ID" value="NC_010602.1"/>
</dbReference>
<dbReference type="SMR" id="B0SRF2"/>
<dbReference type="STRING" id="456481.LEPBI_I3380"/>
<dbReference type="KEGG" id="lbi:LEPBI_I3380"/>
<dbReference type="HOGENOM" id="CLU_057217_5_2_12"/>
<dbReference type="OrthoDB" id="9812586at2"/>
<dbReference type="BioCyc" id="LBIF456481:LEPBI_RS16565-MONOMER"/>
<dbReference type="Proteomes" id="UP000001847">
    <property type="component" value="Chromosome I"/>
</dbReference>
<dbReference type="GO" id="GO:0005737">
    <property type="term" value="C:cytoplasm"/>
    <property type="evidence" value="ECO:0007669"/>
    <property type="project" value="UniProtKB-SubCell"/>
</dbReference>
<dbReference type="GO" id="GO:0000774">
    <property type="term" value="F:adenyl-nucleotide exchange factor activity"/>
    <property type="evidence" value="ECO:0007669"/>
    <property type="project" value="InterPro"/>
</dbReference>
<dbReference type="GO" id="GO:0042803">
    <property type="term" value="F:protein homodimerization activity"/>
    <property type="evidence" value="ECO:0007669"/>
    <property type="project" value="InterPro"/>
</dbReference>
<dbReference type="GO" id="GO:0051087">
    <property type="term" value="F:protein-folding chaperone binding"/>
    <property type="evidence" value="ECO:0007669"/>
    <property type="project" value="InterPro"/>
</dbReference>
<dbReference type="GO" id="GO:0051082">
    <property type="term" value="F:unfolded protein binding"/>
    <property type="evidence" value="ECO:0007669"/>
    <property type="project" value="TreeGrafter"/>
</dbReference>
<dbReference type="GO" id="GO:0006457">
    <property type="term" value="P:protein folding"/>
    <property type="evidence" value="ECO:0007669"/>
    <property type="project" value="InterPro"/>
</dbReference>
<dbReference type="CDD" id="cd00446">
    <property type="entry name" value="GrpE"/>
    <property type="match status" value="1"/>
</dbReference>
<dbReference type="Gene3D" id="3.90.20.20">
    <property type="match status" value="1"/>
</dbReference>
<dbReference type="Gene3D" id="2.30.22.10">
    <property type="entry name" value="Head domain of nucleotide exchange factor GrpE"/>
    <property type="match status" value="1"/>
</dbReference>
<dbReference type="HAMAP" id="MF_01151">
    <property type="entry name" value="GrpE"/>
    <property type="match status" value="1"/>
</dbReference>
<dbReference type="InterPro" id="IPR000740">
    <property type="entry name" value="GrpE"/>
</dbReference>
<dbReference type="InterPro" id="IPR013805">
    <property type="entry name" value="GrpE_coiled_coil"/>
</dbReference>
<dbReference type="InterPro" id="IPR009012">
    <property type="entry name" value="GrpE_head"/>
</dbReference>
<dbReference type="NCBIfam" id="NF010744">
    <property type="entry name" value="PRK14146.1"/>
    <property type="match status" value="1"/>
</dbReference>
<dbReference type="PANTHER" id="PTHR21237">
    <property type="entry name" value="GRPE PROTEIN"/>
    <property type="match status" value="1"/>
</dbReference>
<dbReference type="PANTHER" id="PTHR21237:SF23">
    <property type="entry name" value="GRPE PROTEIN HOMOLOG, MITOCHONDRIAL"/>
    <property type="match status" value="1"/>
</dbReference>
<dbReference type="Pfam" id="PF01025">
    <property type="entry name" value="GrpE"/>
    <property type="match status" value="1"/>
</dbReference>
<dbReference type="PRINTS" id="PR00773">
    <property type="entry name" value="GRPEPROTEIN"/>
</dbReference>
<dbReference type="SUPFAM" id="SSF58014">
    <property type="entry name" value="Coiled-coil domain of nucleotide exchange factor GrpE"/>
    <property type="match status" value="1"/>
</dbReference>
<dbReference type="SUPFAM" id="SSF51064">
    <property type="entry name" value="Head domain of nucleotide exchange factor GrpE"/>
    <property type="match status" value="1"/>
</dbReference>
<reference key="1">
    <citation type="journal article" date="2008" name="PLoS ONE">
        <title>Genome sequence of the saprophyte Leptospira biflexa provides insights into the evolution of Leptospira and the pathogenesis of leptospirosis.</title>
        <authorList>
            <person name="Picardeau M."/>
            <person name="Bulach D.M."/>
            <person name="Bouchier C."/>
            <person name="Zuerner R.L."/>
            <person name="Zidane N."/>
            <person name="Wilson P.J."/>
            <person name="Creno S."/>
            <person name="Kuczek E.S."/>
            <person name="Bommezzadri S."/>
            <person name="Davis J.C."/>
            <person name="McGrath A."/>
            <person name="Johnson M.J."/>
            <person name="Boursaux-Eude C."/>
            <person name="Seemann T."/>
            <person name="Rouy Z."/>
            <person name="Coppel R.L."/>
            <person name="Rood J.I."/>
            <person name="Lajus A."/>
            <person name="Davies J.K."/>
            <person name="Medigue C."/>
            <person name="Adler B."/>
        </authorList>
    </citation>
    <scope>NUCLEOTIDE SEQUENCE [LARGE SCALE GENOMIC DNA]</scope>
    <source>
        <strain>Patoc 1 / ATCC 23582 / Paris</strain>
    </source>
</reference>
<name>GRPE_LEPBP</name>
<gene>
    <name evidence="1" type="primary">grpE</name>
    <name type="ordered locus">LEPBI_I3380</name>
</gene>
<sequence length="190" mass="21531">MAEETNQSLEDQNVQVEEGQTISDEAIEQAVEGAEKELDNAKKEIESLKDSWLRERAEFQNYKRRTANDLLNARKESIKKFAEGLTGALDNLERVSNVPNQTPEVVAFVEGIKMVQKEFYSVLEKEGIKRLDPKGQPFDPMLMEAIASEESAEFTEETVVETYQAGYYHEEGESKQSIRPARVKVGKPQS</sequence>
<feature type="chain" id="PRO_1000137582" description="Protein GrpE">
    <location>
        <begin position="1"/>
        <end position="190"/>
    </location>
</feature>
<feature type="region of interest" description="Disordered" evidence="2">
    <location>
        <begin position="1"/>
        <end position="22"/>
    </location>
</feature>
<feature type="region of interest" description="Disordered" evidence="2">
    <location>
        <begin position="170"/>
        <end position="190"/>
    </location>
</feature>
<feature type="compositionally biased region" description="Basic residues" evidence="2">
    <location>
        <begin position="181"/>
        <end position="190"/>
    </location>
</feature>
<keyword id="KW-0143">Chaperone</keyword>
<keyword id="KW-0963">Cytoplasm</keyword>
<keyword id="KW-1185">Reference proteome</keyword>
<keyword id="KW-0346">Stress response</keyword>
<proteinExistence type="inferred from homology"/>
<accession>B0SRF2</accession>